<feature type="chain" id="PRO_1000087387" description="Glutathione-regulated potassium-efflux system protein KefB">
    <location>
        <begin position="1"/>
        <end position="601"/>
    </location>
</feature>
<feature type="transmembrane region" description="Helical" evidence="1">
    <location>
        <begin position="4"/>
        <end position="24"/>
    </location>
</feature>
<feature type="transmembrane region" description="Helical" evidence="1">
    <location>
        <begin position="29"/>
        <end position="49"/>
    </location>
</feature>
<feature type="transmembrane region" description="Helical" evidence="1">
    <location>
        <begin position="55"/>
        <end position="75"/>
    </location>
</feature>
<feature type="transmembrane region" description="Helical" evidence="1">
    <location>
        <begin position="87"/>
        <end position="107"/>
    </location>
</feature>
<feature type="transmembrane region" description="Helical" evidence="1">
    <location>
        <begin position="111"/>
        <end position="131"/>
    </location>
</feature>
<feature type="transmembrane region" description="Helical" evidence="1">
    <location>
        <begin position="152"/>
        <end position="172"/>
    </location>
</feature>
<feature type="transmembrane region" description="Helical" evidence="1">
    <location>
        <begin position="177"/>
        <end position="197"/>
    </location>
</feature>
<feature type="transmembrane region" description="Helical" evidence="1">
    <location>
        <begin position="207"/>
        <end position="227"/>
    </location>
</feature>
<feature type="transmembrane region" description="Helical" evidence="1">
    <location>
        <begin position="230"/>
        <end position="250"/>
    </location>
</feature>
<feature type="transmembrane region" description="Helical" evidence="1">
    <location>
        <begin position="262"/>
        <end position="282"/>
    </location>
</feature>
<feature type="transmembrane region" description="Helical" evidence="1">
    <location>
        <begin position="284"/>
        <end position="304"/>
    </location>
</feature>
<feature type="transmembrane region" description="Helical" evidence="1">
    <location>
        <begin position="324"/>
        <end position="344"/>
    </location>
</feature>
<feature type="transmembrane region" description="Helical" evidence="1">
    <location>
        <begin position="356"/>
        <end position="376"/>
    </location>
</feature>
<feature type="domain" description="RCK N-terminal" evidence="2">
    <location>
        <begin position="400"/>
        <end position="519"/>
    </location>
</feature>
<proteinExistence type="inferred from homology"/>
<sequence length="601" mass="66402">MEGADLLTAGVLFLFAAVAAVPLAARLGIGAVLGYLLAGIAIGPWGLGFISDVDEILHFSELGVVFLMFIIGLELNPSRLWQLRRSIFGVGAAQVLLSAAVLAGLLMLADFLWQAAVVGGIGLAMSSTAMALQLMREKGMNRSESGQLGFSVLLFQDLAVIPALALVPLLAGSADEHFDWFKVAMKVLAFAVMLIGGRYLLRPVFRFIAASGVREVFTAATLLLVLSAALFMDALGLSMALGTFIAGVLLAESEYRHELENAIDPFKGLLLGLFFISVGMSLNLGVLYTHLLWVAASVVILVVIKMLTLYLLARLYGIRSSERMQFASVLSQGGEFAFVLFSTASSQRLFQGDQMALLLVTVTLSMMTTPLLMKGIDKWLSRRLNGPEENDEKPWVEDDKPQVIVVGFGRFGQVIARLLMANKMRITVLERDIGAVNLMRKYGYKVYYGDATQVELLRSAGAEAAESIVITCNEPEDTMKLVALCQQHFPHLHILARARGRVEAHELLQAGVTQFSRETFSSALELGRKTLVSLGMHPHQAQRAQLHFRRLDMRMLRELIPEHSDMVQISRAREARRELEEIFQREMQQERRQLDGWDEFE</sequence>
<protein>
    <recommendedName>
        <fullName evidence="1">Glutathione-regulated potassium-efflux system protein KefB</fullName>
    </recommendedName>
    <alternativeName>
        <fullName evidence="1">K(+)/H(+) antiporter</fullName>
    </alternativeName>
</protein>
<name>KEFB_SALPB</name>
<organism>
    <name type="scientific">Salmonella paratyphi B (strain ATCC BAA-1250 / SPB7)</name>
    <dbReference type="NCBI Taxonomy" id="1016998"/>
    <lineage>
        <taxon>Bacteria</taxon>
        <taxon>Pseudomonadati</taxon>
        <taxon>Pseudomonadota</taxon>
        <taxon>Gammaproteobacteria</taxon>
        <taxon>Enterobacterales</taxon>
        <taxon>Enterobacteriaceae</taxon>
        <taxon>Salmonella</taxon>
    </lineage>
</organism>
<evidence type="ECO:0000255" key="1">
    <source>
        <dbReference type="HAMAP-Rule" id="MF_01412"/>
    </source>
</evidence>
<evidence type="ECO:0000255" key="2">
    <source>
        <dbReference type="PROSITE-ProRule" id="PRU00543"/>
    </source>
</evidence>
<dbReference type="EMBL" id="CP000886">
    <property type="protein sequence ID" value="ABX69617.1"/>
    <property type="molecule type" value="Genomic_DNA"/>
</dbReference>
<dbReference type="RefSeq" id="WP_000398133.1">
    <property type="nucleotide sequence ID" value="NC_010102.1"/>
</dbReference>
<dbReference type="SMR" id="A9MT17"/>
<dbReference type="KEGG" id="spq:SPAB_04300"/>
<dbReference type="PATRIC" id="fig|1016998.12.peg.4046"/>
<dbReference type="HOGENOM" id="CLU_005126_9_3_6"/>
<dbReference type="BioCyc" id="SENT1016998:SPAB_RS17520-MONOMER"/>
<dbReference type="Proteomes" id="UP000008556">
    <property type="component" value="Chromosome"/>
</dbReference>
<dbReference type="GO" id="GO:0005886">
    <property type="term" value="C:plasma membrane"/>
    <property type="evidence" value="ECO:0007669"/>
    <property type="project" value="UniProtKB-SubCell"/>
</dbReference>
<dbReference type="GO" id="GO:0015503">
    <property type="term" value="F:glutathione-regulated potassium exporter activity"/>
    <property type="evidence" value="ECO:0007669"/>
    <property type="project" value="UniProtKB-UniRule"/>
</dbReference>
<dbReference type="GO" id="GO:1902600">
    <property type="term" value="P:proton transmembrane transport"/>
    <property type="evidence" value="ECO:0007669"/>
    <property type="project" value="InterPro"/>
</dbReference>
<dbReference type="FunFam" id="1.20.1530.20:FF:000001">
    <property type="entry name" value="Glutathione-regulated potassium-efflux system protein KefB"/>
    <property type="match status" value="1"/>
</dbReference>
<dbReference type="FunFam" id="3.40.50.720:FF:000036">
    <property type="entry name" value="Glutathione-regulated potassium-efflux system protein KefB"/>
    <property type="match status" value="1"/>
</dbReference>
<dbReference type="Gene3D" id="1.20.1530.20">
    <property type="match status" value="1"/>
</dbReference>
<dbReference type="Gene3D" id="3.40.50.720">
    <property type="entry name" value="NAD(P)-binding Rossmann-like Domain"/>
    <property type="match status" value="1"/>
</dbReference>
<dbReference type="HAMAP" id="MF_01412">
    <property type="entry name" value="K_H_efflux_KefB"/>
    <property type="match status" value="1"/>
</dbReference>
<dbReference type="InterPro" id="IPR006153">
    <property type="entry name" value="Cation/H_exchanger_TM"/>
</dbReference>
<dbReference type="InterPro" id="IPR004771">
    <property type="entry name" value="K/H_exchanger"/>
</dbReference>
<dbReference type="InterPro" id="IPR020884">
    <property type="entry name" value="K_H_efflux_KefB"/>
</dbReference>
<dbReference type="InterPro" id="IPR006036">
    <property type="entry name" value="K_uptake_TrkA"/>
</dbReference>
<dbReference type="InterPro" id="IPR038770">
    <property type="entry name" value="Na+/solute_symporter_sf"/>
</dbReference>
<dbReference type="InterPro" id="IPR036291">
    <property type="entry name" value="NAD(P)-bd_dom_sf"/>
</dbReference>
<dbReference type="InterPro" id="IPR003148">
    <property type="entry name" value="RCK_N"/>
</dbReference>
<dbReference type="NCBIfam" id="TIGR00932">
    <property type="entry name" value="2a37"/>
    <property type="match status" value="1"/>
</dbReference>
<dbReference type="NCBIfam" id="NF002973">
    <property type="entry name" value="PRK03659.1"/>
    <property type="match status" value="1"/>
</dbReference>
<dbReference type="PANTHER" id="PTHR46157">
    <property type="entry name" value="K(+) EFFLUX ANTIPORTER 3, CHLOROPLASTIC"/>
    <property type="match status" value="1"/>
</dbReference>
<dbReference type="PANTHER" id="PTHR46157:SF4">
    <property type="entry name" value="K(+) EFFLUX ANTIPORTER 3, CHLOROPLASTIC"/>
    <property type="match status" value="1"/>
</dbReference>
<dbReference type="Pfam" id="PF00999">
    <property type="entry name" value="Na_H_Exchanger"/>
    <property type="match status" value="1"/>
</dbReference>
<dbReference type="Pfam" id="PF02254">
    <property type="entry name" value="TrkA_N"/>
    <property type="match status" value="1"/>
</dbReference>
<dbReference type="PRINTS" id="PR00335">
    <property type="entry name" value="KUPTAKETRKA"/>
</dbReference>
<dbReference type="SUPFAM" id="SSF51735">
    <property type="entry name" value="NAD(P)-binding Rossmann-fold domains"/>
    <property type="match status" value="1"/>
</dbReference>
<dbReference type="PROSITE" id="PS51201">
    <property type="entry name" value="RCK_N"/>
    <property type="match status" value="1"/>
</dbReference>
<reference key="1">
    <citation type="submission" date="2007-11" db="EMBL/GenBank/DDBJ databases">
        <authorList>
            <consortium name="The Salmonella enterica serovar Paratyphi B Genome Sequencing Project"/>
            <person name="McClelland M."/>
            <person name="Sanderson E.K."/>
            <person name="Porwollik S."/>
            <person name="Spieth J."/>
            <person name="Clifton W.S."/>
            <person name="Fulton R."/>
            <person name="Cordes M."/>
            <person name="Wollam A."/>
            <person name="Shah N."/>
            <person name="Pepin K."/>
            <person name="Bhonagiri V."/>
            <person name="Nash W."/>
            <person name="Johnson M."/>
            <person name="Thiruvilangam P."/>
            <person name="Wilson R."/>
        </authorList>
    </citation>
    <scope>NUCLEOTIDE SEQUENCE [LARGE SCALE GENOMIC DNA]</scope>
    <source>
        <strain>ATCC BAA-1250 / SPB7</strain>
    </source>
</reference>
<keyword id="KW-0050">Antiport</keyword>
<keyword id="KW-0997">Cell inner membrane</keyword>
<keyword id="KW-1003">Cell membrane</keyword>
<keyword id="KW-0406">Ion transport</keyword>
<keyword id="KW-0472">Membrane</keyword>
<keyword id="KW-0630">Potassium</keyword>
<keyword id="KW-0633">Potassium transport</keyword>
<keyword id="KW-0812">Transmembrane</keyword>
<keyword id="KW-1133">Transmembrane helix</keyword>
<keyword id="KW-0813">Transport</keyword>
<accession>A9MT17</accession>
<comment type="function">
    <text evidence="1">Pore-forming subunit of a potassium efflux system that confers protection against electrophiles. Catalyzes K(+)/H(+) antiport.</text>
</comment>
<comment type="subunit">
    <text evidence="1">Interacts with the regulatory subunit KefG.</text>
</comment>
<comment type="subcellular location">
    <subcellularLocation>
        <location evidence="1">Cell inner membrane</location>
        <topology evidence="1">Multi-pass membrane protein</topology>
    </subcellularLocation>
</comment>
<comment type="similarity">
    <text evidence="1">Belongs to the monovalent cation:proton antiporter 2 (CPA2) transporter (TC 2.A.37) family. KefB subfamily.</text>
</comment>
<gene>
    <name evidence="1" type="primary">kefB</name>
    <name type="ordered locus">SPAB_04300</name>
</gene>